<feature type="chain" id="PRO_0000370042" description="3-deoxy-manno-octulosonate cytidylyltransferase">
    <location>
        <begin position="1"/>
        <end position="263"/>
    </location>
</feature>
<dbReference type="EC" id="2.7.7.38" evidence="1"/>
<dbReference type="EMBL" id="CP000614">
    <property type="protein sequence ID" value="ABO55632.1"/>
    <property type="molecule type" value="Genomic_DNA"/>
</dbReference>
<dbReference type="SMR" id="A4JH79"/>
<dbReference type="KEGG" id="bvi:Bcep1808_2640"/>
<dbReference type="eggNOG" id="COG1212">
    <property type="taxonomic scope" value="Bacteria"/>
</dbReference>
<dbReference type="HOGENOM" id="CLU_065038_1_0_4"/>
<dbReference type="UniPathway" id="UPA00030"/>
<dbReference type="UniPathway" id="UPA00358">
    <property type="reaction ID" value="UER00476"/>
</dbReference>
<dbReference type="Proteomes" id="UP000002287">
    <property type="component" value="Chromosome 1"/>
</dbReference>
<dbReference type="GO" id="GO:0005829">
    <property type="term" value="C:cytosol"/>
    <property type="evidence" value="ECO:0007669"/>
    <property type="project" value="TreeGrafter"/>
</dbReference>
<dbReference type="GO" id="GO:0008690">
    <property type="term" value="F:3-deoxy-manno-octulosonate cytidylyltransferase activity"/>
    <property type="evidence" value="ECO:0007669"/>
    <property type="project" value="UniProtKB-UniRule"/>
</dbReference>
<dbReference type="GO" id="GO:0033468">
    <property type="term" value="P:CMP-keto-3-deoxy-D-manno-octulosonic acid biosynthetic process"/>
    <property type="evidence" value="ECO:0007669"/>
    <property type="project" value="UniProtKB-UniRule"/>
</dbReference>
<dbReference type="GO" id="GO:0009103">
    <property type="term" value="P:lipopolysaccharide biosynthetic process"/>
    <property type="evidence" value="ECO:0007669"/>
    <property type="project" value="UniProtKB-UniRule"/>
</dbReference>
<dbReference type="CDD" id="cd02517">
    <property type="entry name" value="CMP-KDO-Synthetase"/>
    <property type="match status" value="1"/>
</dbReference>
<dbReference type="FunFam" id="3.90.550.10:FF:000011">
    <property type="entry name" value="3-deoxy-manno-octulosonate cytidylyltransferase"/>
    <property type="match status" value="1"/>
</dbReference>
<dbReference type="Gene3D" id="3.90.550.10">
    <property type="entry name" value="Spore Coat Polysaccharide Biosynthesis Protein SpsA, Chain A"/>
    <property type="match status" value="1"/>
</dbReference>
<dbReference type="HAMAP" id="MF_00057">
    <property type="entry name" value="KdsB"/>
    <property type="match status" value="1"/>
</dbReference>
<dbReference type="InterPro" id="IPR003329">
    <property type="entry name" value="Cytidylyl_trans"/>
</dbReference>
<dbReference type="InterPro" id="IPR004528">
    <property type="entry name" value="KdsB"/>
</dbReference>
<dbReference type="InterPro" id="IPR029044">
    <property type="entry name" value="Nucleotide-diphossugar_trans"/>
</dbReference>
<dbReference type="NCBIfam" id="TIGR00466">
    <property type="entry name" value="kdsB"/>
    <property type="match status" value="1"/>
</dbReference>
<dbReference type="NCBIfam" id="NF003952">
    <property type="entry name" value="PRK05450.1-5"/>
    <property type="match status" value="1"/>
</dbReference>
<dbReference type="NCBIfam" id="NF009905">
    <property type="entry name" value="PRK13368.1"/>
    <property type="match status" value="1"/>
</dbReference>
<dbReference type="PANTHER" id="PTHR42866">
    <property type="entry name" value="3-DEOXY-MANNO-OCTULOSONATE CYTIDYLYLTRANSFERASE"/>
    <property type="match status" value="1"/>
</dbReference>
<dbReference type="PANTHER" id="PTHR42866:SF2">
    <property type="entry name" value="3-DEOXY-MANNO-OCTULOSONATE CYTIDYLYLTRANSFERASE, MITOCHONDRIAL"/>
    <property type="match status" value="1"/>
</dbReference>
<dbReference type="Pfam" id="PF02348">
    <property type="entry name" value="CTP_transf_3"/>
    <property type="match status" value="1"/>
</dbReference>
<dbReference type="SUPFAM" id="SSF53448">
    <property type="entry name" value="Nucleotide-diphospho-sugar transferases"/>
    <property type="match status" value="1"/>
</dbReference>
<comment type="function">
    <text evidence="1">Activates KDO (a required 8-carbon sugar) for incorporation into bacterial lipopolysaccharide in Gram-negative bacteria.</text>
</comment>
<comment type="catalytic activity">
    <reaction evidence="1">
        <text>3-deoxy-alpha-D-manno-oct-2-ulosonate + CTP = CMP-3-deoxy-beta-D-manno-octulosonate + diphosphate</text>
        <dbReference type="Rhea" id="RHEA:23448"/>
        <dbReference type="ChEBI" id="CHEBI:33019"/>
        <dbReference type="ChEBI" id="CHEBI:37563"/>
        <dbReference type="ChEBI" id="CHEBI:85986"/>
        <dbReference type="ChEBI" id="CHEBI:85987"/>
        <dbReference type="EC" id="2.7.7.38"/>
    </reaction>
</comment>
<comment type="pathway">
    <text evidence="1">Nucleotide-sugar biosynthesis; CMP-3-deoxy-D-manno-octulosonate biosynthesis; CMP-3-deoxy-D-manno-octulosonate from 3-deoxy-D-manno-octulosonate and CTP: step 1/1.</text>
</comment>
<comment type="pathway">
    <text evidence="1">Bacterial outer membrane biogenesis; lipopolysaccharide biosynthesis.</text>
</comment>
<comment type="subcellular location">
    <subcellularLocation>
        <location evidence="1">Cytoplasm</location>
    </subcellularLocation>
</comment>
<comment type="similarity">
    <text evidence="1">Belongs to the KdsB family.</text>
</comment>
<accession>A4JH79</accession>
<gene>
    <name evidence="1" type="primary">kdsB</name>
    <name type="ordered locus">Bcep1808_2640</name>
</gene>
<proteinExistence type="inferred from homology"/>
<keyword id="KW-0963">Cytoplasm</keyword>
<keyword id="KW-0448">Lipopolysaccharide biosynthesis</keyword>
<keyword id="KW-0548">Nucleotidyltransferase</keyword>
<keyword id="KW-0808">Transferase</keyword>
<name>KDSB_BURVG</name>
<evidence type="ECO:0000255" key="1">
    <source>
        <dbReference type="HAMAP-Rule" id="MF_00057"/>
    </source>
</evidence>
<organism>
    <name type="scientific">Burkholderia vietnamiensis (strain G4 / LMG 22486)</name>
    <name type="common">Burkholderia cepacia (strain R1808)</name>
    <dbReference type="NCBI Taxonomy" id="269482"/>
    <lineage>
        <taxon>Bacteria</taxon>
        <taxon>Pseudomonadati</taxon>
        <taxon>Pseudomonadota</taxon>
        <taxon>Betaproteobacteria</taxon>
        <taxon>Burkholderiales</taxon>
        <taxon>Burkholderiaceae</taxon>
        <taxon>Burkholderia</taxon>
        <taxon>Burkholderia cepacia complex</taxon>
    </lineage>
</organism>
<protein>
    <recommendedName>
        <fullName evidence="1">3-deoxy-manno-octulosonate cytidylyltransferase</fullName>
        <ecNumber evidence="1">2.7.7.38</ecNumber>
    </recommendedName>
    <alternativeName>
        <fullName evidence="1">CMP-2-keto-3-deoxyoctulosonic acid synthase</fullName>
        <shortName evidence="1">CKS</shortName>
        <shortName evidence="1">CMP-KDO synthase</shortName>
    </alternativeName>
</protein>
<reference key="1">
    <citation type="submission" date="2007-03" db="EMBL/GenBank/DDBJ databases">
        <title>Complete sequence of chromosome 1 of Burkholderia vietnamiensis G4.</title>
        <authorList>
            <consortium name="US DOE Joint Genome Institute"/>
            <person name="Copeland A."/>
            <person name="Lucas S."/>
            <person name="Lapidus A."/>
            <person name="Barry K."/>
            <person name="Detter J.C."/>
            <person name="Glavina del Rio T."/>
            <person name="Hammon N."/>
            <person name="Israni S."/>
            <person name="Dalin E."/>
            <person name="Tice H."/>
            <person name="Pitluck S."/>
            <person name="Chain P."/>
            <person name="Malfatti S."/>
            <person name="Shin M."/>
            <person name="Vergez L."/>
            <person name="Schmutz J."/>
            <person name="Larimer F."/>
            <person name="Land M."/>
            <person name="Hauser L."/>
            <person name="Kyrpides N."/>
            <person name="Tiedje J."/>
            <person name="Richardson P."/>
        </authorList>
    </citation>
    <scope>NUCLEOTIDE SEQUENCE [LARGE SCALE GENOMIC DNA]</scope>
    <source>
        <strain>G4 / LMG 22486</strain>
    </source>
</reference>
<sequence length="263" mass="28712">MTHPQPFIAVIPARLASTRLPNKPLADVGGKPMVVRVAERAREAGAQQVLVASDTQAVLDAARDHGFDALLTRADHPSGTDRLAEVAARFGWRDDTVVVNVQGDEPLIDPTLVRDVASHLAAHPDCAIATAAHPIHDAADVFNPNVVKVALDARSVAMYFSRAPIPWSRDAYQPHWPDVAAMPAPAFPVYRHIGLYAYRARFLRTYPSLAQAPIEQAEQLEQLRAMWHGERIAVLITERAPEAGVDTPADLARVQALFRPSSK</sequence>